<accession>P05941</accession>
<comment type="function">
    <text>In muscle, parvalbumin is thought to be involved in relaxation after contraction. It binds two calcium ions.</text>
</comment>
<comment type="miscellaneous">
    <text>Three parvalbumin isotypes, in nearly equal proportion, are found in toadfish white trunk muscle whereas only one main component (IIIF) is present in the swimbladder muscle of adult specimens.</text>
</comment>
<comment type="similarity">
    <text evidence="4">Belongs to the parvalbumin family.</text>
</comment>
<name>PRVB_OPSTA</name>
<reference key="1">
    <citation type="journal article" date="1989" name="Comp. Biochem. Physiol.">
        <title>The amino acid sequence of the parvalbumin from the very fast swimbladder muscle of the toadfish (Opsanus tau).</title>
        <authorList>
            <person name="Gerday C."/>
            <person name="Collins S."/>
            <person name="Gerardin-Otthiers N."/>
        </authorList>
    </citation>
    <scope>PROTEIN SEQUENCE</scope>
    <scope>ACETYLATION AT SER-1</scope>
    <source>
        <tissue>Fast swimbladder muscle</tissue>
    </source>
</reference>
<reference key="2">
    <citation type="journal article" date="1985" name="FEBS Lett.">
        <title>Crystal structure study of Opsanus tau parvalbumin by multiwavelength anomalous diffraction.</title>
        <authorList>
            <person name="Kahn R."/>
            <person name="Fourme R."/>
            <person name="Bosshard R."/>
            <person name="Chiadmi M."/>
            <person name="Risler J.-L."/>
            <person name="Dideberg O."/>
            <person name="Wery J.P."/>
        </authorList>
    </citation>
    <scope>X-RAY CRYSTALLOGRAPHY (2.3 ANGSTROMS)</scope>
</reference>
<reference key="3">
    <citation type="journal article" date="1985" name="FEBS Lett.">
        <title>Crystallization and structure at 3.2-A resolution of a terbium parvalbumin.</title>
        <authorList>
            <person name="Wery J.P."/>
            <person name="Dideberg O."/>
            <person name="Charlier P."/>
            <person name="Gerday C."/>
        </authorList>
    </citation>
    <scope>X-RAY CRYSTALLOGRAPHY (3.2 ANGSTROMS)</scope>
</reference>
<evidence type="ECO:0000250" key="1">
    <source>
        <dbReference type="UniProtKB" id="P02621"/>
    </source>
</evidence>
<evidence type="ECO:0000255" key="2">
    <source>
        <dbReference type="PROSITE-ProRule" id="PRU00448"/>
    </source>
</evidence>
<evidence type="ECO:0000269" key="3">
    <source>
    </source>
</evidence>
<evidence type="ECO:0000305" key="4"/>
<sequence length="109" mass="11757">SFAGILSDADIDAALAACQAAESFKHKEFFAKVGLSAKTPDVIKKAFYVIDQDKSGFIEEDELKLFLQNFASSARALTDKETETFLKAGDSDGDGKIGIDEFADLVKEA</sequence>
<protein>
    <recommendedName>
        <fullName>Parvalbumin beta</fullName>
    </recommendedName>
    <alternativeName>
        <fullName>Parvalbumin IIIF</fullName>
    </alternativeName>
</protein>
<dbReference type="PIR" id="JL0094">
    <property type="entry name" value="PVTFB3"/>
</dbReference>
<dbReference type="SMR" id="P05941"/>
<dbReference type="iPTMnet" id="P05941"/>
<dbReference type="GO" id="GO:0005737">
    <property type="term" value="C:cytoplasm"/>
    <property type="evidence" value="ECO:0007669"/>
    <property type="project" value="TreeGrafter"/>
</dbReference>
<dbReference type="GO" id="GO:0005509">
    <property type="term" value="F:calcium ion binding"/>
    <property type="evidence" value="ECO:0007669"/>
    <property type="project" value="InterPro"/>
</dbReference>
<dbReference type="FunFam" id="1.10.238.10:FF:000060">
    <property type="entry name" value="Parvalbumin, thymic"/>
    <property type="match status" value="1"/>
</dbReference>
<dbReference type="Gene3D" id="1.10.238.10">
    <property type="entry name" value="EF-hand"/>
    <property type="match status" value="1"/>
</dbReference>
<dbReference type="InterPro" id="IPR011992">
    <property type="entry name" value="EF-hand-dom_pair"/>
</dbReference>
<dbReference type="InterPro" id="IPR018247">
    <property type="entry name" value="EF_Hand_1_Ca_BS"/>
</dbReference>
<dbReference type="InterPro" id="IPR002048">
    <property type="entry name" value="EF_hand_dom"/>
</dbReference>
<dbReference type="InterPro" id="IPR008080">
    <property type="entry name" value="Parvalbumin"/>
</dbReference>
<dbReference type="PANTHER" id="PTHR11653:SF12">
    <property type="entry name" value="PARVALBUMIN"/>
    <property type="match status" value="1"/>
</dbReference>
<dbReference type="PANTHER" id="PTHR11653">
    <property type="entry name" value="PARVALBUMIN ALPHA"/>
    <property type="match status" value="1"/>
</dbReference>
<dbReference type="Pfam" id="PF13499">
    <property type="entry name" value="EF-hand_7"/>
    <property type="match status" value="1"/>
</dbReference>
<dbReference type="PRINTS" id="PR01697">
    <property type="entry name" value="PARVALBUMIN"/>
</dbReference>
<dbReference type="SMART" id="SM00054">
    <property type="entry name" value="EFh"/>
    <property type="match status" value="2"/>
</dbReference>
<dbReference type="SUPFAM" id="SSF47473">
    <property type="entry name" value="EF-hand"/>
    <property type="match status" value="1"/>
</dbReference>
<dbReference type="PROSITE" id="PS00018">
    <property type="entry name" value="EF_HAND_1"/>
    <property type="match status" value="2"/>
</dbReference>
<dbReference type="PROSITE" id="PS50222">
    <property type="entry name" value="EF_HAND_2"/>
    <property type="match status" value="2"/>
</dbReference>
<organism>
    <name type="scientific">Opsanus tau</name>
    <name type="common">Oyster toadfish</name>
    <name type="synonym">Gadus tau</name>
    <dbReference type="NCBI Taxonomy" id="8068"/>
    <lineage>
        <taxon>Eukaryota</taxon>
        <taxon>Metazoa</taxon>
        <taxon>Chordata</taxon>
        <taxon>Craniata</taxon>
        <taxon>Vertebrata</taxon>
        <taxon>Euteleostomi</taxon>
        <taxon>Actinopterygii</taxon>
        <taxon>Neopterygii</taxon>
        <taxon>Teleostei</taxon>
        <taxon>Neoteleostei</taxon>
        <taxon>Acanthomorphata</taxon>
        <taxon>Batrachoidaria</taxon>
        <taxon>Batrachoididae</taxon>
        <taxon>Opsanus</taxon>
    </lineage>
</organism>
<feature type="chain" id="PRO_0000073616" description="Parvalbumin beta">
    <location>
        <begin position="1"/>
        <end position="109"/>
    </location>
</feature>
<feature type="domain" description="EF-hand 1" evidence="2">
    <location>
        <begin position="38"/>
        <end position="73"/>
    </location>
</feature>
<feature type="domain" description="EF-hand 2" evidence="2">
    <location>
        <begin position="77"/>
        <end position="109"/>
    </location>
</feature>
<feature type="binding site" evidence="2">
    <location>
        <position position="51"/>
    </location>
    <ligand>
        <name>Ca(2+)</name>
        <dbReference type="ChEBI" id="CHEBI:29108"/>
        <label>1</label>
    </ligand>
</feature>
<feature type="binding site" evidence="2">
    <location>
        <position position="53"/>
    </location>
    <ligand>
        <name>Ca(2+)</name>
        <dbReference type="ChEBI" id="CHEBI:29108"/>
        <label>1</label>
    </ligand>
</feature>
<feature type="binding site" evidence="2">
    <location>
        <position position="55"/>
    </location>
    <ligand>
        <name>Ca(2+)</name>
        <dbReference type="ChEBI" id="CHEBI:29108"/>
        <label>1</label>
    </ligand>
</feature>
<feature type="binding site" evidence="1">
    <location>
        <position position="57"/>
    </location>
    <ligand>
        <name>Ca(2+)</name>
        <dbReference type="ChEBI" id="CHEBI:29108"/>
        <label>1</label>
    </ligand>
</feature>
<feature type="binding site" evidence="1">
    <location>
        <position position="59"/>
    </location>
    <ligand>
        <name>Ca(2+)</name>
        <dbReference type="ChEBI" id="CHEBI:29108"/>
        <label>1</label>
    </ligand>
</feature>
<feature type="binding site" evidence="2">
    <location>
        <position position="62"/>
    </location>
    <ligand>
        <name>Ca(2+)</name>
        <dbReference type="ChEBI" id="CHEBI:29108"/>
        <label>1</label>
    </ligand>
</feature>
<feature type="binding site" evidence="2">
    <location>
        <position position="90"/>
    </location>
    <ligand>
        <name>Ca(2+)</name>
        <dbReference type="ChEBI" id="CHEBI:29108"/>
        <label>2</label>
    </ligand>
</feature>
<feature type="binding site" evidence="2">
    <location>
        <position position="92"/>
    </location>
    <ligand>
        <name>Ca(2+)</name>
        <dbReference type="ChEBI" id="CHEBI:29108"/>
        <label>2</label>
    </ligand>
</feature>
<feature type="binding site" evidence="2">
    <location>
        <position position="94"/>
    </location>
    <ligand>
        <name>Ca(2+)</name>
        <dbReference type="ChEBI" id="CHEBI:29108"/>
        <label>2</label>
    </ligand>
</feature>
<feature type="binding site" evidence="2">
    <location>
        <position position="96"/>
    </location>
    <ligand>
        <name>Ca(2+)</name>
        <dbReference type="ChEBI" id="CHEBI:29108"/>
        <label>2</label>
    </ligand>
</feature>
<feature type="binding site" evidence="2">
    <location>
        <position position="101"/>
    </location>
    <ligand>
        <name>Ca(2+)</name>
        <dbReference type="ChEBI" id="CHEBI:29108"/>
        <label>2</label>
    </ligand>
</feature>
<feature type="modified residue" description="N-acetylserine" evidence="3">
    <location>
        <position position="1"/>
    </location>
</feature>
<keyword id="KW-0007">Acetylation</keyword>
<keyword id="KW-0106">Calcium</keyword>
<keyword id="KW-0903">Direct protein sequencing</keyword>
<keyword id="KW-0479">Metal-binding</keyword>
<keyword id="KW-0514">Muscle protein</keyword>
<keyword id="KW-0677">Repeat</keyword>
<proteinExistence type="evidence at protein level"/>